<organism>
    <name type="scientific">Bradyrhizobium diazoefficiens (strain JCM 10833 / BCRC 13528 / IAM 13628 / NBRC 14792 / USDA 110)</name>
    <dbReference type="NCBI Taxonomy" id="224911"/>
    <lineage>
        <taxon>Bacteria</taxon>
        <taxon>Pseudomonadati</taxon>
        <taxon>Pseudomonadota</taxon>
        <taxon>Alphaproteobacteria</taxon>
        <taxon>Hyphomicrobiales</taxon>
        <taxon>Nitrobacteraceae</taxon>
        <taxon>Bradyrhizobium</taxon>
    </lineage>
</organism>
<dbReference type="EC" id="1.7.2.4"/>
<dbReference type="EMBL" id="AJ002531">
    <property type="protein sequence ID" value="CAA05518.1"/>
    <property type="molecule type" value="Genomic_DNA"/>
</dbReference>
<dbReference type="EMBL" id="BA000040">
    <property type="protein sequence ID" value="BAC45580.1"/>
    <property type="molecule type" value="Genomic_DNA"/>
</dbReference>
<dbReference type="PIR" id="T44660">
    <property type="entry name" value="T44660"/>
</dbReference>
<dbReference type="RefSeq" id="NP_766955.1">
    <property type="nucleotide sequence ID" value="NC_004463.1"/>
</dbReference>
<dbReference type="RefSeq" id="WP_011083147.1">
    <property type="nucleotide sequence ID" value="NC_004463.1"/>
</dbReference>
<dbReference type="SMR" id="Q89XJ6"/>
<dbReference type="STRING" id="224911.AAV28_40820"/>
<dbReference type="EnsemblBacteria" id="BAC45580">
    <property type="protein sequence ID" value="BAC45580"/>
    <property type="gene ID" value="BAC45580"/>
</dbReference>
<dbReference type="GeneID" id="46495464"/>
<dbReference type="KEGG" id="bja:blr0315"/>
<dbReference type="PATRIC" id="fig|224911.44.peg.8839"/>
<dbReference type="eggNOG" id="COG4263">
    <property type="taxonomic scope" value="Bacteria"/>
</dbReference>
<dbReference type="HOGENOM" id="CLU_016420_0_0_5"/>
<dbReference type="InParanoid" id="Q89XJ6"/>
<dbReference type="OrthoDB" id="9759695at2"/>
<dbReference type="PhylomeDB" id="Q89XJ6"/>
<dbReference type="BRENDA" id="1.7.2.4">
    <property type="organism ID" value="14426"/>
</dbReference>
<dbReference type="UniPathway" id="UPA00652">
    <property type="reaction ID" value="UER00709"/>
</dbReference>
<dbReference type="Proteomes" id="UP000002526">
    <property type="component" value="Chromosome"/>
</dbReference>
<dbReference type="GO" id="GO:0016020">
    <property type="term" value="C:membrane"/>
    <property type="evidence" value="ECO:0007669"/>
    <property type="project" value="InterPro"/>
</dbReference>
<dbReference type="GO" id="GO:0042597">
    <property type="term" value="C:periplasmic space"/>
    <property type="evidence" value="ECO:0007669"/>
    <property type="project" value="UniProtKB-SubCell"/>
</dbReference>
<dbReference type="GO" id="GO:0005509">
    <property type="term" value="F:calcium ion binding"/>
    <property type="evidence" value="ECO:0007669"/>
    <property type="project" value="UniProtKB-UniRule"/>
</dbReference>
<dbReference type="GO" id="GO:0005507">
    <property type="term" value="F:copper ion binding"/>
    <property type="evidence" value="ECO:0007669"/>
    <property type="project" value="UniProtKB-UniRule"/>
</dbReference>
<dbReference type="GO" id="GO:0004129">
    <property type="term" value="F:cytochrome-c oxidase activity"/>
    <property type="evidence" value="ECO:0007669"/>
    <property type="project" value="InterPro"/>
</dbReference>
<dbReference type="GO" id="GO:0050304">
    <property type="term" value="F:nitrous-oxide reductase activity"/>
    <property type="evidence" value="ECO:0007669"/>
    <property type="project" value="UniProtKB-UniRule"/>
</dbReference>
<dbReference type="GO" id="GO:0019333">
    <property type="term" value="P:denitrification pathway"/>
    <property type="evidence" value="ECO:0007669"/>
    <property type="project" value="UniProtKB-UniPathway"/>
</dbReference>
<dbReference type="Gene3D" id="2.60.40.420">
    <property type="entry name" value="Cupredoxins - blue copper proteins"/>
    <property type="match status" value="1"/>
</dbReference>
<dbReference type="Gene3D" id="2.130.10.10">
    <property type="entry name" value="YVTN repeat-like/Quinoprotein amine dehydrogenase"/>
    <property type="match status" value="1"/>
</dbReference>
<dbReference type="HAMAP" id="MF_00716">
    <property type="entry name" value="NosZ"/>
    <property type="match status" value="1"/>
</dbReference>
<dbReference type="InterPro" id="IPR002429">
    <property type="entry name" value="CcO_II-like_C"/>
</dbReference>
<dbReference type="InterPro" id="IPR008972">
    <property type="entry name" value="Cupredoxin"/>
</dbReference>
<dbReference type="InterPro" id="IPR028096">
    <property type="entry name" value="EfeO_Cupredoxin"/>
</dbReference>
<dbReference type="InterPro" id="IPR011045">
    <property type="entry name" value="N2O_reductase_N"/>
</dbReference>
<dbReference type="InterPro" id="IPR023644">
    <property type="entry name" value="NO_Rdtase"/>
</dbReference>
<dbReference type="InterPro" id="IPR041114">
    <property type="entry name" value="Nos_propeller"/>
</dbReference>
<dbReference type="InterPro" id="IPR041142">
    <property type="entry name" value="NOS_propeller_2"/>
</dbReference>
<dbReference type="InterPro" id="IPR051403">
    <property type="entry name" value="NosZ/Cyto_c_oxidase_sub2"/>
</dbReference>
<dbReference type="InterPro" id="IPR006311">
    <property type="entry name" value="TAT_signal"/>
</dbReference>
<dbReference type="InterPro" id="IPR015943">
    <property type="entry name" value="WD40/YVTN_repeat-like_dom_sf"/>
</dbReference>
<dbReference type="NCBIfam" id="TIGR04244">
    <property type="entry name" value="nitrous_NosZ_RR"/>
    <property type="match status" value="1"/>
</dbReference>
<dbReference type="PANTHER" id="PTHR42838">
    <property type="entry name" value="CYTOCHROME C OXIDASE SUBUNIT II"/>
    <property type="match status" value="1"/>
</dbReference>
<dbReference type="PANTHER" id="PTHR42838:SF2">
    <property type="entry name" value="NITROUS-OXIDE REDUCTASE"/>
    <property type="match status" value="1"/>
</dbReference>
<dbReference type="Pfam" id="PF13473">
    <property type="entry name" value="Cupredoxin_1"/>
    <property type="match status" value="1"/>
</dbReference>
<dbReference type="Pfam" id="PF18764">
    <property type="entry name" value="nos_propeller"/>
    <property type="match status" value="1"/>
</dbReference>
<dbReference type="Pfam" id="PF18793">
    <property type="entry name" value="nos_propeller_2"/>
    <property type="match status" value="1"/>
</dbReference>
<dbReference type="SUPFAM" id="SSF49503">
    <property type="entry name" value="Cupredoxins"/>
    <property type="match status" value="1"/>
</dbReference>
<dbReference type="SUPFAM" id="SSF50974">
    <property type="entry name" value="Nitrous oxide reductase, N-terminal domain"/>
    <property type="match status" value="1"/>
</dbReference>
<dbReference type="PROSITE" id="PS50857">
    <property type="entry name" value="COX2_CUA"/>
    <property type="match status" value="1"/>
</dbReference>
<dbReference type="PROSITE" id="PS51318">
    <property type="entry name" value="TAT"/>
    <property type="match status" value="1"/>
</dbReference>
<sequence>MSDSDNIKGVSRRTLLGTTAAAAGVGLAGGAVVTKDGAGFVSTADAQTKSAAPKAPPARPAVQKTEVAPGELDEYYVFFSSGQSGEMRIIGLPSMRELMRVPVFNRCSATGWGQTNESLKVLTEGMQPATREFLKNRGGTFMNGDLHHPHVSFTDGTYDGRYAFMNDKANSRVARVRLDVMKCDKIIELPNQHTVHGLRLQKYPRTGYVFCNGEDGVPLPNDGKVLDNPKEYHSIFTALDGDTMKVAWQVMVSGNLDNVDSDYQGKYCFSTCYNAEEGVTLAEMTANEQDWVVIFNLKRIEEAVKKGDFKEMNGVPVIDGRKGSPYTRYVPVSNNPHGMNTAPDGIHIVAAGKLSPTVTVMDVRLFDQLFDDKIKPRDVVVAEPELGLGPLHTAYDGKGNAYTTLFLDSQVVKWNIDLAKRAFKGEKVDPIIQKLDVHYQPGHNHSSMGQTKEADGKWLISLNKFSKDRFLNVGPLKPENDQLIDISGDQMKLVHDGPSFAEPHDATIVHRSKINPISIWDRADPMFADAVKQAKADGINLEADSKIIRDGNKVRVYMTSTAPAFGLEQFQVKQGDQVTVYITNIDAVEDLTHGFCIVNYGIQMEVAPMATASVSFSADKAGVYWYYCSWFCHAMHMEMKGRMFVEPKSV</sequence>
<gene>
    <name type="primary">nosZ</name>
    <name type="ordered locus">blr0315</name>
</gene>
<comment type="function">
    <text evidence="1">Nitrous-oxide reductase is part of a bacterial respiratory system which is activated under anaerobic conditions in the presence of nitrate or nitrous oxide.</text>
</comment>
<comment type="catalytic activity">
    <reaction>
        <text>N2 + 2 Fe(III)-[cytochrome c] + H2O = nitrous oxide + 2 Fe(II)-[cytochrome c] + 2 H(+)</text>
        <dbReference type="Rhea" id="RHEA:43108"/>
        <dbReference type="Rhea" id="RHEA-COMP:10350"/>
        <dbReference type="Rhea" id="RHEA-COMP:14399"/>
        <dbReference type="ChEBI" id="CHEBI:15377"/>
        <dbReference type="ChEBI" id="CHEBI:15378"/>
        <dbReference type="ChEBI" id="CHEBI:17045"/>
        <dbReference type="ChEBI" id="CHEBI:17997"/>
        <dbReference type="ChEBI" id="CHEBI:29033"/>
        <dbReference type="ChEBI" id="CHEBI:29034"/>
        <dbReference type="EC" id="1.7.2.4"/>
    </reaction>
</comment>
<comment type="cofactor">
    <cofactor evidence="1">
        <name>Ca(2+)</name>
        <dbReference type="ChEBI" id="CHEBI:29108"/>
    </cofactor>
    <text evidence="1">Binds 2 calcium ions per subunit.</text>
</comment>
<comment type="cofactor">
    <cofactor evidence="1">
        <name>Cu cation</name>
        <dbReference type="ChEBI" id="CHEBI:23378"/>
    </cofactor>
    <text evidence="1">Binds 6 Cu cations per subunit. Each subunit contains 2 copper centers; Cu(A) (binuclear) and Cu(Z) (tetranuclear). Cu(Z) is thought to be the site of nitrous oxide reduction.</text>
</comment>
<comment type="pathway">
    <text>Nitrogen metabolism; nitrate reduction (denitrification); dinitrogen from nitrate: step 4/4.</text>
</comment>
<comment type="subunit">
    <text evidence="1">Homodimer.</text>
</comment>
<comment type="subcellular location">
    <subcellularLocation>
        <location evidence="1">Periplasm</location>
    </subcellularLocation>
</comment>
<comment type="PTM">
    <text>Predicted to be exported by the Tat system. The position of the signal peptide cleavage has not been experimentally proven.</text>
</comment>
<comment type="similarity">
    <text evidence="3">Belongs to the NosZ family.</text>
</comment>
<comment type="similarity">
    <text evidence="3">In the C-terminal section; belongs to the cytochrome c oxidase subunit 2 family.</text>
</comment>
<accession>Q89XJ6</accession>
<accession>O31382</accession>
<keyword id="KW-0106">Calcium</keyword>
<keyword id="KW-0186">Copper</keyword>
<keyword id="KW-0479">Metal-binding</keyword>
<keyword id="KW-0560">Oxidoreductase</keyword>
<keyword id="KW-0574">Periplasm</keyword>
<keyword id="KW-1185">Reference proteome</keyword>
<keyword id="KW-0732">Signal</keyword>
<protein>
    <recommendedName>
        <fullName>Nitrous-oxide reductase</fullName>
        <ecNumber>1.7.2.4</ecNumber>
    </recommendedName>
    <alternativeName>
        <fullName>N(2)OR</fullName>
    </alternativeName>
    <alternativeName>
        <fullName>N2O reductase</fullName>
    </alternativeName>
</protein>
<evidence type="ECO:0000250" key="1"/>
<evidence type="ECO:0000255" key="2"/>
<evidence type="ECO:0000305" key="3"/>
<feature type="signal peptide" description="Tat-type signal" evidence="2">
    <location>
        <begin position="1"/>
        <end position="46"/>
    </location>
</feature>
<feature type="chain" id="PRO_0000019824" description="Nitrous-oxide reductase">
    <location>
        <begin position="47"/>
        <end position="650"/>
    </location>
</feature>
<feature type="region of interest" description="COX2-like">
    <location>
        <begin position="552"/>
        <end position="650"/>
    </location>
</feature>
<feature type="binding site" evidence="1">
    <location>
        <position position="147"/>
    </location>
    <ligand>
        <name>Cu cation</name>
        <dbReference type="ChEBI" id="CHEBI:23378"/>
        <label>Z2</label>
    </ligand>
</feature>
<feature type="binding site" evidence="1">
    <location>
        <position position="148"/>
    </location>
    <ligand>
        <name>Cu cation</name>
        <dbReference type="ChEBI" id="CHEBI:23378"/>
        <label>Z3</label>
    </ligand>
</feature>
<feature type="binding site" evidence="1">
    <location>
        <position position="196"/>
    </location>
    <ligand>
        <name>Cu cation</name>
        <dbReference type="ChEBI" id="CHEBI:23378"/>
        <label>Z2</label>
    </ligand>
</feature>
<feature type="binding site" evidence="1">
    <location>
        <position position="273"/>
    </location>
    <ligand>
        <name>Ca(2+)</name>
        <dbReference type="ChEBI" id="CHEBI:29108"/>
        <label>2</label>
    </ligand>
</feature>
<feature type="binding site" evidence="1">
    <location>
        <position position="276"/>
    </location>
    <ligand>
        <name>Ca(2+)</name>
        <dbReference type="ChEBI" id="CHEBI:29108"/>
        <label>2</label>
    </ligand>
</feature>
<feature type="binding site" evidence="1">
    <location>
        <position position="284"/>
    </location>
    <ligand>
        <name>Ca(2+)</name>
        <dbReference type="ChEBI" id="CHEBI:29108"/>
        <label>2</label>
    </ligand>
</feature>
<feature type="binding site" evidence="1">
    <location>
        <position position="290"/>
    </location>
    <ligand>
        <name>Ca(2+)</name>
        <dbReference type="ChEBI" id="CHEBI:29108"/>
        <label>2</label>
    </ligand>
</feature>
<feature type="binding site" evidence="1">
    <location>
        <position position="335"/>
    </location>
    <ligand>
        <name>Ca(2+)</name>
        <dbReference type="ChEBI" id="CHEBI:29108"/>
        <label>2</label>
    </ligand>
</feature>
<feature type="binding site" evidence="1">
    <location>
        <position position="337"/>
    </location>
    <ligand>
        <name>Cu cation</name>
        <dbReference type="ChEBI" id="CHEBI:23378"/>
        <label>Z1</label>
    </ligand>
</feature>
<feature type="binding site" evidence="1">
    <location>
        <position position="392"/>
    </location>
    <ligand>
        <name>Cu cation</name>
        <dbReference type="ChEBI" id="CHEBI:23378"/>
        <label>Z1</label>
    </ligand>
</feature>
<feature type="binding site" evidence="1">
    <location>
        <position position="443"/>
    </location>
    <ligand>
        <name>Cu cation</name>
        <dbReference type="ChEBI" id="CHEBI:23378"/>
        <label>Z3</label>
    </ligand>
</feature>
<feature type="binding site" evidence="1">
    <location>
        <position position="464"/>
    </location>
    <ligand>
        <name>Ca(2+)</name>
        <dbReference type="ChEBI" id="CHEBI:29108"/>
        <label>1</label>
    </ligand>
</feature>
<feature type="binding site" evidence="1">
    <location>
        <position position="479"/>
    </location>
    <ligand>
        <name>Ca(2+)</name>
        <dbReference type="ChEBI" id="CHEBI:29108"/>
        <label>1</label>
    </ligand>
</feature>
<feature type="binding site" evidence="1">
    <location>
        <position position="504"/>
    </location>
    <ligand>
        <name>Cu cation</name>
        <dbReference type="ChEBI" id="CHEBI:23378"/>
        <label>Z4</label>
    </ligand>
</feature>
<feature type="binding site" evidence="1">
    <location>
        <position position="593"/>
    </location>
    <ligand>
        <name>Cu cation</name>
        <dbReference type="ChEBI" id="CHEBI:23378"/>
        <label>A1</label>
    </ligand>
</feature>
<feature type="binding site" evidence="1">
    <location>
        <position position="628"/>
    </location>
    <ligand>
        <name>Cu cation</name>
        <dbReference type="ChEBI" id="CHEBI:23378"/>
        <label>A1</label>
    </ligand>
</feature>
<feature type="binding site" evidence="1">
    <location>
        <position position="628"/>
    </location>
    <ligand>
        <name>Cu cation</name>
        <dbReference type="ChEBI" id="CHEBI:23378"/>
        <label>A2</label>
    </ligand>
</feature>
<feature type="binding site" evidence="1">
    <location>
        <position position="630"/>
    </location>
    <ligand>
        <name>Cu cation</name>
        <dbReference type="ChEBI" id="CHEBI:23378"/>
        <label>A2</label>
    </ligand>
</feature>
<feature type="binding site" evidence="1">
    <location>
        <position position="632"/>
    </location>
    <ligand>
        <name>Cu cation</name>
        <dbReference type="ChEBI" id="CHEBI:23378"/>
        <label>A1</label>
    </ligand>
</feature>
<feature type="binding site" evidence="1">
    <location>
        <position position="632"/>
    </location>
    <ligand>
        <name>Cu cation</name>
        <dbReference type="ChEBI" id="CHEBI:23378"/>
        <label>A2</label>
    </ligand>
</feature>
<feature type="binding site" evidence="1">
    <location>
        <position position="636"/>
    </location>
    <ligand>
        <name>Cu cation</name>
        <dbReference type="ChEBI" id="CHEBI:23378"/>
        <label>A2</label>
    </ligand>
</feature>
<feature type="binding site" evidence="1">
    <location>
        <position position="639"/>
    </location>
    <ligand>
        <name>Cu cation</name>
        <dbReference type="ChEBI" id="CHEBI:23378"/>
        <label>A1</label>
    </ligand>
</feature>
<feature type="sequence conflict" description="In Ref. 1; CAA05518." evidence="3" ref="1">
    <original>D</original>
    <variation>N</variation>
    <location>
        <position position="367"/>
    </location>
</feature>
<name>NOSZ_BRADU</name>
<reference key="1">
    <citation type="submission" date="1998-03" db="EMBL/GenBank/DDBJ databases">
        <title>Bradyrhizobium japonicum nosRZDFYLX gene cluster.</title>
        <authorList>
            <person name="Bedmar E.J."/>
            <person name="Velasco L."/>
            <person name="Xu C.A."/>
            <person name="Delgado M.J."/>
        </authorList>
    </citation>
    <scope>NUCLEOTIDE SEQUENCE [GENOMIC DNA]</scope>
    <source>
        <strain>JCM 10833 / BCRC 13528 / IAM 13628 / NBRC 14792 / USDA 110</strain>
    </source>
</reference>
<reference key="2">
    <citation type="journal article" date="2002" name="DNA Res.">
        <title>Complete genomic sequence of nitrogen-fixing symbiotic bacterium Bradyrhizobium japonicum USDA110.</title>
        <authorList>
            <person name="Kaneko T."/>
            <person name="Nakamura Y."/>
            <person name="Sato S."/>
            <person name="Minamisawa K."/>
            <person name="Uchiumi T."/>
            <person name="Sasamoto S."/>
            <person name="Watanabe A."/>
            <person name="Idesawa K."/>
            <person name="Iriguchi M."/>
            <person name="Kawashima K."/>
            <person name="Kohara M."/>
            <person name="Matsumoto M."/>
            <person name="Shimpo S."/>
            <person name="Tsuruoka H."/>
            <person name="Wada T."/>
            <person name="Yamada M."/>
            <person name="Tabata S."/>
        </authorList>
    </citation>
    <scope>NUCLEOTIDE SEQUENCE [LARGE SCALE GENOMIC DNA]</scope>
    <source>
        <strain>JCM 10833 / BCRC 13528 / IAM 13628 / NBRC 14792 / USDA 110</strain>
    </source>
</reference>
<proteinExistence type="inferred from homology"/>